<protein>
    <recommendedName>
        <fullName>Probable endo-xylogalacturonan hydrolase A</fullName>
        <ecNumber>3.2.1.-</ecNumber>
    </recommendedName>
</protein>
<dbReference type="EC" id="3.2.1.-"/>
<dbReference type="EMBL" id="DQ374431">
    <property type="protein sequence ID" value="ABD61571.1"/>
    <property type="molecule type" value="Genomic_DNA"/>
</dbReference>
<dbReference type="EMBL" id="AM270096">
    <property type="protein sequence ID" value="CAK47977.1"/>
    <property type="molecule type" value="Genomic_DNA"/>
</dbReference>
<dbReference type="RefSeq" id="XP_001402326.1">
    <property type="nucleotide sequence ID" value="XM_001402289.1"/>
</dbReference>
<dbReference type="SMR" id="A2QK83"/>
<dbReference type="CAZy" id="GH28">
    <property type="family name" value="Glycoside Hydrolase Family 28"/>
</dbReference>
<dbReference type="GlyCosmos" id="A2QK83">
    <property type="glycosylation" value="3 sites, No reported glycans"/>
</dbReference>
<dbReference type="EnsemblFungi" id="CAK47977">
    <property type="protein sequence ID" value="CAK47977"/>
    <property type="gene ID" value="An04g09700"/>
</dbReference>
<dbReference type="GeneID" id="4991373"/>
<dbReference type="KEGG" id="ang:An04g09700"/>
<dbReference type="VEuPathDB" id="FungiDB:An04g09700"/>
<dbReference type="HOGENOM" id="CLU_016031_1_3_1"/>
<dbReference type="Proteomes" id="UP000006706">
    <property type="component" value="Chromosome 6L"/>
</dbReference>
<dbReference type="GO" id="GO:0005576">
    <property type="term" value="C:extracellular region"/>
    <property type="evidence" value="ECO:0007669"/>
    <property type="project" value="UniProtKB-SubCell"/>
</dbReference>
<dbReference type="GO" id="GO:0004650">
    <property type="term" value="F:polygalacturonase activity"/>
    <property type="evidence" value="ECO:0007669"/>
    <property type="project" value="InterPro"/>
</dbReference>
<dbReference type="GO" id="GO:0071555">
    <property type="term" value="P:cell wall organization"/>
    <property type="evidence" value="ECO:0007669"/>
    <property type="project" value="UniProtKB-KW"/>
</dbReference>
<dbReference type="GO" id="GO:0045490">
    <property type="term" value="P:pectin catabolic process"/>
    <property type="evidence" value="ECO:0007669"/>
    <property type="project" value="UniProtKB-ARBA"/>
</dbReference>
<dbReference type="Gene3D" id="2.160.20.10">
    <property type="entry name" value="Single-stranded right-handed beta-helix, Pectin lyase-like"/>
    <property type="match status" value="1"/>
</dbReference>
<dbReference type="InterPro" id="IPR000743">
    <property type="entry name" value="Glyco_hydro_28"/>
</dbReference>
<dbReference type="InterPro" id="IPR006626">
    <property type="entry name" value="PbH1"/>
</dbReference>
<dbReference type="InterPro" id="IPR012334">
    <property type="entry name" value="Pectin_lyas_fold"/>
</dbReference>
<dbReference type="InterPro" id="IPR011050">
    <property type="entry name" value="Pectin_lyase_fold/virulence"/>
</dbReference>
<dbReference type="PANTHER" id="PTHR31736">
    <property type="match status" value="1"/>
</dbReference>
<dbReference type="PANTHER" id="PTHR31736:SF9">
    <property type="entry name" value="ENDO-XYLOGALACTURONAN HYDROLASE A-RELATED"/>
    <property type="match status" value="1"/>
</dbReference>
<dbReference type="Pfam" id="PF00295">
    <property type="entry name" value="Glyco_hydro_28"/>
    <property type="match status" value="1"/>
</dbReference>
<dbReference type="SMART" id="SM00710">
    <property type="entry name" value="PbH1"/>
    <property type="match status" value="5"/>
</dbReference>
<dbReference type="SUPFAM" id="SSF51126">
    <property type="entry name" value="Pectin lyase-like"/>
    <property type="match status" value="1"/>
</dbReference>
<name>XGHA_ASPNC</name>
<comment type="function">
    <text evidence="1">Pectinolytic enzyme involved in the degradation of xylogalacturonan (xga), a galacturonan backbone heavily substituted with xylose, and which is one important component of the hairy regions of pectin. Activity requires a galacturonic acid backbone substituted with xylose (By similarity).</text>
</comment>
<comment type="subcellular location">
    <subcellularLocation>
        <location evidence="1">Secreted</location>
    </subcellularLocation>
</comment>
<comment type="similarity">
    <text evidence="3">Belongs to the glycosyl hydrolase 28 family.</text>
</comment>
<sequence length="406" mass="42123">MTLYRNLLLLASLGLSYAAPSKVQRAPDSSLHARAVCTPTAGGDSSTDDVPAITEALSSCGNGGTIVFPEGSTYYLNSVLDLGNCSNCDIQVEGLLKFASDTDYWSGRTAMISVSDVDGLKLRSLTGSGVIDGNGQDAWDLFASDSSYSRPTLLYITGGSNLEISGLRQKNPPNVFNSVKGGATNVVFSNLKMDANSKSDNPPKNTDGFDIGESTYVTITEVTVVNDDDCVALKPSSNYVTVDTISCTGSHGISVGSLGKSSDDSVKNIYVTGATMINSTKAAGIKTYPSGGDHGTSTVSNVTFTDFTVDNSDYAFQIQSCYGEDDDYCEENPGNAKLTDIVVSSFSGTTSDKYDPVVANIDCGSDGTCGISISGFDVKAPSGKSEVLCANTPSDLGVTCTSGASG</sequence>
<reference key="1">
    <citation type="journal article" date="2006" name="Biochem. J.">
        <title>A new group of exo-acting family 28 glycoside hydrolases of Aspergillus niger that are involved in pectin degradation.</title>
        <authorList>
            <person name="Martens-Uzunova E.S."/>
            <person name="Zandleven J.S."/>
            <person name="Benen J.A."/>
            <person name="Awad H."/>
            <person name="Kools H.J."/>
            <person name="Beldman G."/>
            <person name="Voragen A.G."/>
            <person name="Van den Berg J.A."/>
            <person name="Schaap P.J."/>
        </authorList>
    </citation>
    <scope>NUCLEOTIDE SEQUENCE [GENOMIC DNA]</scope>
</reference>
<reference key="2">
    <citation type="journal article" date="2007" name="Nat. Biotechnol.">
        <title>Genome sequencing and analysis of the versatile cell factory Aspergillus niger CBS 513.88.</title>
        <authorList>
            <person name="Pel H.J."/>
            <person name="de Winde J.H."/>
            <person name="Archer D.B."/>
            <person name="Dyer P.S."/>
            <person name="Hofmann G."/>
            <person name="Schaap P.J."/>
            <person name="Turner G."/>
            <person name="de Vries R.P."/>
            <person name="Albang R."/>
            <person name="Albermann K."/>
            <person name="Andersen M.R."/>
            <person name="Bendtsen J.D."/>
            <person name="Benen J.A.E."/>
            <person name="van den Berg M."/>
            <person name="Breestraat S."/>
            <person name="Caddick M.X."/>
            <person name="Contreras R."/>
            <person name="Cornell M."/>
            <person name="Coutinho P.M."/>
            <person name="Danchin E.G.J."/>
            <person name="Debets A.J.M."/>
            <person name="Dekker P."/>
            <person name="van Dijck P.W.M."/>
            <person name="van Dijk A."/>
            <person name="Dijkhuizen L."/>
            <person name="Driessen A.J.M."/>
            <person name="d'Enfert C."/>
            <person name="Geysens S."/>
            <person name="Goosen C."/>
            <person name="Groot G.S.P."/>
            <person name="de Groot P.W.J."/>
            <person name="Guillemette T."/>
            <person name="Henrissat B."/>
            <person name="Herweijer M."/>
            <person name="van den Hombergh J.P.T.W."/>
            <person name="van den Hondel C.A.M.J.J."/>
            <person name="van der Heijden R.T.J.M."/>
            <person name="van der Kaaij R.M."/>
            <person name="Klis F.M."/>
            <person name="Kools H.J."/>
            <person name="Kubicek C.P."/>
            <person name="van Kuyk P.A."/>
            <person name="Lauber J."/>
            <person name="Lu X."/>
            <person name="van der Maarel M.J.E.C."/>
            <person name="Meulenberg R."/>
            <person name="Menke H."/>
            <person name="Mortimer M.A."/>
            <person name="Nielsen J."/>
            <person name="Oliver S.G."/>
            <person name="Olsthoorn M."/>
            <person name="Pal K."/>
            <person name="van Peij N.N.M.E."/>
            <person name="Ram A.F.J."/>
            <person name="Rinas U."/>
            <person name="Roubos J.A."/>
            <person name="Sagt C.M.J."/>
            <person name="Schmoll M."/>
            <person name="Sun J."/>
            <person name="Ussery D."/>
            <person name="Varga J."/>
            <person name="Vervecken W."/>
            <person name="van de Vondervoort P.J.J."/>
            <person name="Wedler H."/>
            <person name="Woesten H.A.B."/>
            <person name="Zeng A.-P."/>
            <person name="van Ooyen A.J.J."/>
            <person name="Visser J."/>
            <person name="Stam H."/>
        </authorList>
    </citation>
    <scope>NUCLEOTIDE SEQUENCE [LARGE SCALE GENOMIC DNA]</scope>
    <source>
        <strain>ATCC MYA-4892 / CBS 513.88 / FGSC A1513</strain>
    </source>
</reference>
<organism>
    <name type="scientific">Aspergillus niger (strain ATCC MYA-4892 / CBS 513.88 / FGSC A1513)</name>
    <dbReference type="NCBI Taxonomy" id="425011"/>
    <lineage>
        <taxon>Eukaryota</taxon>
        <taxon>Fungi</taxon>
        <taxon>Dikarya</taxon>
        <taxon>Ascomycota</taxon>
        <taxon>Pezizomycotina</taxon>
        <taxon>Eurotiomycetes</taxon>
        <taxon>Eurotiomycetidae</taxon>
        <taxon>Eurotiales</taxon>
        <taxon>Aspergillaceae</taxon>
        <taxon>Aspergillus</taxon>
        <taxon>Aspergillus subgen. Circumdati</taxon>
    </lineage>
</organism>
<accession>A2QK83</accession>
<accession>Q27UA4</accession>
<keyword id="KW-0119">Carbohydrate metabolism</keyword>
<keyword id="KW-0961">Cell wall biogenesis/degradation</keyword>
<keyword id="KW-0325">Glycoprotein</keyword>
<keyword id="KW-0326">Glycosidase</keyword>
<keyword id="KW-0378">Hydrolase</keyword>
<keyword id="KW-0624">Polysaccharide degradation</keyword>
<keyword id="KW-1185">Reference proteome</keyword>
<keyword id="KW-0677">Repeat</keyword>
<keyword id="KW-0964">Secreted</keyword>
<keyword id="KW-0732">Signal</keyword>
<evidence type="ECO:0000250" key="1"/>
<evidence type="ECO:0000255" key="2"/>
<evidence type="ECO:0000305" key="3"/>
<proteinExistence type="inferred from homology"/>
<gene>
    <name type="primary">xghA</name>
    <name type="ORF">An04g09700</name>
</gene>
<feature type="signal peptide" evidence="2">
    <location>
        <begin position="1"/>
        <end position="18"/>
    </location>
</feature>
<feature type="chain" id="PRO_5000219960" description="Probable endo-xylogalacturonan hydrolase A">
    <location>
        <begin position="19"/>
        <end position="406"/>
    </location>
</feature>
<feature type="repeat" description="PbH1 1">
    <location>
        <begin position="183"/>
        <end position="213"/>
    </location>
</feature>
<feature type="repeat" description="PbH1 2">
    <location>
        <begin position="214"/>
        <end position="235"/>
    </location>
</feature>
<feature type="repeat" description="PbH1 3">
    <location>
        <begin position="266"/>
        <end position="289"/>
    </location>
</feature>
<feature type="repeat" description="PbH1 4">
    <location>
        <begin position="299"/>
        <end position="320"/>
    </location>
</feature>
<feature type="repeat" description="PbH1 5">
    <location>
        <begin position="333"/>
        <end position="375"/>
    </location>
</feature>
<feature type="active site" description="Proton donor" evidence="1">
    <location>
        <position position="228"/>
    </location>
</feature>
<feature type="active site" evidence="1">
    <location>
        <position position="251"/>
    </location>
</feature>
<feature type="glycosylation site" description="N-linked (GlcNAc...) asparagine" evidence="2">
    <location>
        <position position="84"/>
    </location>
</feature>
<feature type="glycosylation site" description="N-linked (GlcNAc...) asparagine" evidence="2">
    <location>
        <position position="278"/>
    </location>
</feature>
<feature type="glycosylation site" description="N-linked (GlcNAc...) asparagine" evidence="2">
    <location>
        <position position="301"/>
    </location>
</feature>